<reference key="1">
    <citation type="journal article" date="2006" name="BMC Genomics">
        <title>Complete genome sequence of Shigella flexneri 5b and comparison with Shigella flexneri 2a.</title>
        <authorList>
            <person name="Nie H."/>
            <person name="Yang F."/>
            <person name="Zhang X."/>
            <person name="Yang J."/>
            <person name="Chen L."/>
            <person name="Wang J."/>
            <person name="Xiong Z."/>
            <person name="Peng J."/>
            <person name="Sun L."/>
            <person name="Dong J."/>
            <person name="Xue Y."/>
            <person name="Xu X."/>
            <person name="Chen S."/>
            <person name="Yao Z."/>
            <person name="Shen Y."/>
            <person name="Jin Q."/>
        </authorList>
    </citation>
    <scope>NUCLEOTIDE SEQUENCE [LARGE SCALE GENOMIC DNA]</scope>
    <source>
        <strain>8401</strain>
    </source>
</reference>
<sequence length="132" mass="14519">MSKTLNIIWQYLRAFVLIYACLYAGIFIASLLPVTIPGSIIGMLILSVLLALQILPAKWVNPGCYVLIRYMALLFVPIGVGVMQYFDLLRAQFGPVVVSCAVSTLVVFLVVSWSSQLVHGERKVVGQKGSEE</sequence>
<feature type="chain" id="PRO_1000065467" description="UPF0299 membrane protein YohJ">
    <location>
        <begin position="1"/>
        <end position="132"/>
    </location>
</feature>
<feature type="transmembrane region" description="Helical" evidence="1">
    <location>
        <begin position="5"/>
        <end position="25"/>
    </location>
</feature>
<feature type="transmembrane region" description="Helical" evidence="1">
    <location>
        <begin position="26"/>
        <end position="46"/>
    </location>
</feature>
<feature type="transmembrane region" description="Helical" evidence="1">
    <location>
        <begin position="63"/>
        <end position="83"/>
    </location>
</feature>
<feature type="transmembrane region" description="Helical" evidence="1">
    <location>
        <begin position="93"/>
        <end position="113"/>
    </location>
</feature>
<organism>
    <name type="scientific">Shigella flexneri serotype 5b (strain 8401)</name>
    <dbReference type="NCBI Taxonomy" id="373384"/>
    <lineage>
        <taxon>Bacteria</taxon>
        <taxon>Pseudomonadati</taxon>
        <taxon>Pseudomonadota</taxon>
        <taxon>Gammaproteobacteria</taxon>
        <taxon>Enterobacterales</taxon>
        <taxon>Enterobacteriaceae</taxon>
        <taxon>Shigella</taxon>
    </lineage>
</organism>
<dbReference type="EMBL" id="CP000266">
    <property type="protein sequence ID" value="ABF04333.1"/>
    <property type="molecule type" value="Genomic_DNA"/>
</dbReference>
<dbReference type="RefSeq" id="WP_011587250.1">
    <property type="nucleotide sequence ID" value="NC_008258.1"/>
</dbReference>
<dbReference type="SMR" id="Q0T2Y2"/>
<dbReference type="KEGG" id="sfv:SFV_2216"/>
<dbReference type="HOGENOM" id="CLU_113736_1_1_6"/>
<dbReference type="Proteomes" id="UP000000659">
    <property type="component" value="Chromosome"/>
</dbReference>
<dbReference type="GO" id="GO:0005886">
    <property type="term" value="C:plasma membrane"/>
    <property type="evidence" value="ECO:0007669"/>
    <property type="project" value="UniProtKB-SubCell"/>
</dbReference>
<dbReference type="HAMAP" id="MF_01144">
    <property type="entry name" value="UPF0299"/>
    <property type="match status" value="1"/>
</dbReference>
<dbReference type="InterPro" id="IPR005538">
    <property type="entry name" value="LrgA/CidA"/>
</dbReference>
<dbReference type="InterPro" id="IPR022957">
    <property type="entry name" value="Uncharacterised_UPF0299"/>
</dbReference>
<dbReference type="NCBIfam" id="NF002494">
    <property type="entry name" value="PRK01821.1"/>
    <property type="match status" value="1"/>
</dbReference>
<dbReference type="PANTHER" id="PTHR33931">
    <property type="entry name" value="HOLIN-LIKE PROTEIN CIDA-RELATED"/>
    <property type="match status" value="1"/>
</dbReference>
<dbReference type="PANTHER" id="PTHR33931:SF5">
    <property type="entry name" value="UPF0299 MEMBRANE PROTEIN YOHJ"/>
    <property type="match status" value="1"/>
</dbReference>
<dbReference type="Pfam" id="PF03788">
    <property type="entry name" value="LrgA"/>
    <property type="match status" value="1"/>
</dbReference>
<gene>
    <name evidence="1" type="primary">yohJ</name>
    <name type="ordered locus">SFV_2216</name>
</gene>
<name>YOHJ_SHIF8</name>
<evidence type="ECO:0000255" key="1">
    <source>
        <dbReference type="HAMAP-Rule" id="MF_01144"/>
    </source>
</evidence>
<comment type="subcellular location">
    <subcellularLocation>
        <location evidence="1">Cell inner membrane</location>
        <topology evidence="1">Multi-pass membrane protein</topology>
    </subcellularLocation>
</comment>
<comment type="similarity">
    <text evidence="1">Belongs to the UPF0299 family.</text>
</comment>
<protein>
    <recommendedName>
        <fullName evidence="1">UPF0299 membrane protein YohJ</fullName>
    </recommendedName>
</protein>
<accession>Q0T2Y2</accession>
<proteinExistence type="inferred from homology"/>
<keyword id="KW-0997">Cell inner membrane</keyword>
<keyword id="KW-1003">Cell membrane</keyword>
<keyword id="KW-0472">Membrane</keyword>
<keyword id="KW-0812">Transmembrane</keyword>
<keyword id="KW-1133">Transmembrane helix</keyword>